<reference key="1">
    <citation type="journal article" date="2002" name="Nature">
        <title>The genome sequence of Schizosaccharomyces pombe.</title>
        <authorList>
            <person name="Wood V."/>
            <person name="Gwilliam R."/>
            <person name="Rajandream M.A."/>
            <person name="Lyne M.H."/>
            <person name="Lyne R."/>
            <person name="Stewart A."/>
            <person name="Sgouros J.G."/>
            <person name="Peat N."/>
            <person name="Hayles J."/>
            <person name="Baker S.G."/>
            <person name="Basham D."/>
            <person name="Bowman S."/>
            <person name="Brooks K."/>
            <person name="Brown D."/>
            <person name="Brown S."/>
            <person name="Chillingworth T."/>
            <person name="Churcher C.M."/>
            <person name="Collins M."/>
            <person name="Connor R."/>
            <person name="Cronin A."/>
            <person name="Davis P."/>
            <person name="Feltwell T."/>
            <person name="Fraser A."/>
            <person name="Gentles S."/>
            <person name="Goble A."/>
            <person name="Hamlin N."/>
            <person name="Harris D.E."/>
            <person name="Hidalgo J."/>
            <person name="Hodgson G."/>
            <person name="Holroyd S."/>
            <person name="Hornsby T."/>
            <person name="Howarth S."/>
            <person name="Huckle E.J."/>
            <person name="Hunt S."/>
            <person name="Jagels K."/>
            <person name="James K.D."/>
            <person name="Jones L."/>
            <person name="Jones M."/>
            <person name="Leather S."/>
            <person name="McDonald S."/>
            <person name="McLean J."/>
            <person name="Mooney P."/>
            <person name="Moule S."/>
            <person name="Mungall K.L."/>
            <person name="Murphy L.D."/>
            <person name="Niblett D."/>
            <person name="Odell C."/>
            <person name="Oliver K."/>
            <person name="O'Neil S."/>
            <person name="Pearson D."/>
            <person name="Quail M.A."/>
            <person name="Rabbinowitsch E."/>
            <person name="Rutherford K.M."/>
            <person name="Rutter S."/>
            <person name="Saunders D."/>
            <person name="Seeger K."/>
            <person name="Sharp S."/>
            <person name="Skelton J."/>
            <person name="Simmonds M.N."/>
            <person name="Squares R."/>
            <person name="Squares S."/>
            <person name="Stevens K."/>
            <person name="Taylor K."/>
            <person name="Taylor R.G."/>
            <person name="Tivey A."/>
            <person name="Walsh S.V."/>
            <person name="Warren T."/>
            <person name="Whitehead S."/>
            <person name="Woodward J.R."/>
            <person name="Volckaert G."/>
            <person name="Aert R."/>
            <person name="Robben J."/>
            <person name="Grymonprez B."/>
            <person name="Weltjens I."/>
            <person name="Vanstreels E."/>
            <person name="Rieger M."/>
            <person name="Schaefer M."/>
            <person name="Mueller-Auer S."/>
            <person name="Gabel C."/>
            <person name="Fuchs M."/>
            <person name="Duesterhoeft A."/>
            <person name="Fritzc C."/>
            <person name="Holzer E."/>
            <person name="Moestl D."/>
            <person name="Hilbert H."/>
            <person name="Borzym K."/>
            <person name="Langer I."/>
            <person name="Beck A."/>
            <person name="Lehrach H."/>
            <person name="Reinhardt R."/>
            <person name="Pohl T.M."/>
            <person name="Eger P."/>
            <person name="Zimmermann W."/>
            <person name="Wedler H."/>
            <person name="Wambutt R."/>
            <person name="Purnelle B."/>
            <person name="Goffeau A."/>
            <person name="Cadieu E."/>
            <person name="Dreano S."/>
            <person name="Gloux S."/>
            <person name="Lelaure V."/>
            <person name="Mottier S."/>
            <person name="Galibert F."/>
            <person name="Aves S.J."/>
            <person name="Xiang Z."/>
            <person name="Hunt C."/>
            <person name="Moore K."/>
            <person name="Hurst S.M."/>
            <person name="Lucas M."/>
            <person name="Rochet M."/>
            <person name="Gaillardin C."/>
            <person name="Tallada V.A."/>
            <person name="Garzon A."/>
            <person name="Thode G."/>
            <person name="Daga R.R."/>
            <person name="Cruzado L."/>
            <person name="Jimenez J."/>
            <person name="Sanchez M."/>
            <person name="del Rey F."/>
            <person name="Benito J."/>
            <person name="Dominguez A."/>
            <person name="Revuelta J.L."/>
            <person name="Moreno S."/>
            <person name="Armstrong J."/>
            <person name="Forsburg S.L."/>
            <person name="Cerutti L."/>
            <person name="Lowe T."/>
            <person name="McCombie W.R."/>
            <person name="Paulsen I."/>
            <person name="Potashkin J."/>
            <person name="Shpakovski G.V."/>
            <person name="Ussery D."/>
            <person name="Barrell B.G."/>
            <person name="Nurse P."/>
        </authorList>
    </citation>
    <scope>NUCLEOTIDE SEQUENCE [LARGE SCALE GENOMIC DNA]</scope>
    <source>
        <strain>972 / ATCC 24843</strain>
    </source>
</reference>
<reference key="2">
    <citation type="journal article" date="2004" name="Yeast">
        <title>Identification of genes encoding putative nucleoporins and transport factors in the fission yeast Schizosaccharomyces pombe: a deletion analysis.</title>
        <authorList>
            <person name="Chen X.Q."/>
            <person name="Du X."/>
            <person name="Liu J."/>
            <person name="Balasubramanian M.K."/>
            <person name="Balasundaram D."/>
        </authorList>
    </citation>
    <scope>FUNCTION</scope>
    <scope>SUBCELLULAR LOCATION</scope>
</reference>
<reference key="3">
    <citation type="journal article" date="2006" name="Nat. Biotechnol.">
        <title>ORFeome cloning and global analysis of protein localization in the fission yeast Schizosaccharomyces pombe.</title>
        <authorList>
            <person name="Matsuyama A."/>
            <person name="Arai R."/>
            <person name="Yashiroda Y."/>
            <person name="Shirai A."/>
            <person name="Kamata A."/>
            <person name="Sekido S."/>
            <person name="Kobayashi Y."/>
            <person name="Hashimoto A."/>
            <person name="Hamamoto M."/>
            <person name="Hiraoka Y."/>
            <person name="Horinouchi S."/>
            <person name="Yoshida M."/>
        </authorList>
    </citation>
    <scope>SUBCELLULAR LOCATION [LARGE SCALE ANALYSIS]</scope>
</reference>
<reference key="4">
    <citation type="journal article" date="2008" name="J. Proteome Res.">
        <title>Phosphoproteome analysis of fission yeast.</title>
        <authorList>
            <person name="Wilson-Grady J.T."/>
            <person name="Villen J."/>
            <person name="Gygi S.P."/>
        </authorList>
    </citation>
    <scope>PHOSPHORYLATION [LARGE SCALE ANALYSIS] AT THR-52</scope>
    <scope>IDENTIFICATION BY MASS SPECTROMETRY</scope>
</reference>
<sequence>MLAPTAAVNVTNEGENDNVMIDTTRGEIEFSDSAVNGTMDIEGAPKFAPAKTSAEKKRGAKPQMRRVPIPPHRMTPLRNVWPKLYPPLVEHLLLQVRMNTKSRSVELRESKATKDPGALQKGMDFVQAFALGFDIDDAIALLRLDDLYIDTFEIKDVKTLQGDHLSRAIGRIAGQGGKTKFAIENASRTRIVLADSKIHILGGFTNIRIAKDAVVSLILGSPPGKVYANLRNAAARAKERI</sequence>
<gene>
    <name type="primary">rbp28</name>
    <name type="synonym">pno1</name>
    <name type="ORF">SPAC2C4.11c</name>
</gene>
<accession>O14044</accession>
<organism>
    <name type="scientific">Schizosaccharomyces pombe (strain 972 / ATCC 24843)</name>
    <name type="common">Fission yeast</name>
    <dbReference type="NCBI Taxonomy" id="284812"/>
    <lineage>
        <taxon>Eukaryota</taxon>
        <taxon>Fungi</taxon>
        <taxon>Dikarya</taxon>
        <taxon>Ascomycota</taxon>
        <taxon>Taphrinomycotina</taxon>
        <taxon>Schizosaccharomycetes</taxon>
        <taxon>Schizosaccharomycetales</taxon>
        <taxon>Schizosaccharomycetaceae</taxon>
        <taxon>Schizosaccharomyces</taxon>
    </lineage>
</organism>
<dbReference type="EMBL" id="CU329670">
    <property type="protein sequence ID" value="CAB16371.2"/>
    <property type="molecule type" value="Genomic_DNA"/>
</dbReference>
<dbReference type="PIR" id="T38522">
    <property type="entry name" value="T38522"/>
</dbReference>
<dbReference type="RefSeq" id="NP_594514.2">
    <property type="nucleotide sequence ID" value="NM_001019943.3"/>
</dbReference>
<dbReference type="SMR" id="O14044"/>
<dbReference type="BioGRID" id="278175">
    <property type="interactions" value="3"/>
</dbReference>
<dbReference type="FunCoup" id="O14044">
    <property type="interactions" value="422"/>
</dbReference>
<dbReference type="STRING" id="284812.O14044"/>
<dbReference type="iPTMnet" id="O14044"/>
<dbReference type="PaxDb" id="4896-SPAC2C4.11c.1"/>
<dbReference type="EnsemblFungi" id="SPAC2C4.11c.1">
    <property type="protein sequence ID" value="SPAC2C4.11c.1:pep"/>
    <property type="gene ID" value="SPAC2C4.11c"/>
</dbReference>
<dbReference type="GeneID" id="2541679"/>
<dbReference type="KEGG" id="spo:2541679"/>
<dbReference type="PomBase" id="SPAC2C4.11c">
    <property type="gene designation" value="rbp28"/>
</dbReference>
<dbReference type="VEuPathDB" id="FungiDB:SPAC2C4.11c"/>
<dbReference type="eggNOG" id="KOG3273">
    <property type="taxonomic scope" value="Eukaryota"/>
</dbReference>
<dbReference type="HOGENOM" id="CLU_064992_0_2_1"/>
<dbReference type="InParanoid" id="O14044"/>
<dbReference type="OMA" id="TPLRNNW"/>
<dbReference type="PhylomeDB" id="O14044"/>
<dbReference type="PRO" id="PR:O14044"/>
<dbReference type="Proteomes" id="UP000002485">
    <property type="component" value="Chromosome I"/>
</dbReference>
<dbReference type="GO" id="GO:0005829">
    <property type="term" value="C:cytosol"/>
    <property type="evidence" value="ECO:0007005"/>
    <property type="project" value="PomBase"/>
</dbReference>
<dbReference type="GO" id="GO:0005730">
    <property type="term" value="C:nucleolus"/>
    <property type="evidence" value="ECO:0000314"/>
    <property type="project" value="PomBase"/>
</dbReference>
<dbReference type="GO" id="GO:0005634">
    <property type="term" value="C:nucleus"/>
    <property type="evidence" value="ECO:0007005"/>
    <property type="project" value="PomBase"/>
</dbReference>
<dbReference type="GO" id="GO:0003723">
    <property type="term" value="F:RNA binding"/>
    <property type="evidence" value="ECO:0000266"/>
    <property type="project" value="PomBase"/>
</dbReference>
<dbReference type="GO" id="GO:0006364">
    <property type="term" value="P:rRNA processing"/>
    <property type="evidence" value="ECO:0000266"/>
    <property type="project" value="PomBase"/>
</dbReference>
<dbReference type="CDD" id="cd22391">
    <property type="entry name" value="KH-I_PNO1_rpt1"/>
    <property type="match status" value="1"/>
</dbReference>
<dbReference type="CDD" id="cd22392">
    <property type="entry name" value="KH-I_PNO1_rpt2"/>
    <property type="match status" value="1"/>
</dbReference>
<dbReference type="FunFam" id="3.30.1370.10:FF:000009">
    <property type="entry name" value="RNA-binding protein PNO1"/>
    <property type="match status" value="1"/>
</dbReference>
<dbReference type="Gene3D" id="3.30.1370.10">
    <property type="entry name" value="K Homology domain, type 1"/>
    <property type="match status" value="1"/>
</dbReference>
<dbReference type="InterPro" id="IPR055212">
    <property type="entry name" value="KH-I_PNO1_first"/>
</dbReference>
<dbReference type="InterPro" id="IPR004087">
    <property type="entry name" value="KH_dom"/>
</dbReference>
<dbReference type="InterPro" id="IPR036612">
    <property type="entry name" value="KH_dom_type_1_sf"/>
</dbReference>
<dbReference type="InterPro" id="IPR055211">
    <property type="entry name" value="KH_PNO1_2nd"/>
</dbReference>
<dbReference type="PANTHER" id="PTHR12826">
    <property type="entry name" value="RIBONUCLEASE Y"/>
    <property type="match status" value="1"/>
</dbReference>
<dbReference type="PANTHER" id="PTHR12826:SF13">
    <property type="entry name" value="RNA-BINDING PROTEIN PNO1"/>
    <property type="match status" value="1"/>
</dbReference>
<dbReference type="Pfam" id="PF22891">
    <property type="entry name" value="KH_PNO1_2nd"/>
    <property type="match status" value="1"/>
</dbReference>
<dbReference type="SMART" id="SM00322">
    <property type="entry name" value="KH"/>
    <property type="match status" value="1"/>
</dbReference>
<dbReference type="SUPFAM" id="SSF54791">
    <property type="entry name" value="Eukaryotic type KH-domain (KH-domain type I)"/>
    <property type="match status" value="1"/>
</dbReference>
<proteinExistence type="evidence at protein level"/>
<protein>
    <recommendedName>
        <fullName>Pre-rRNA-processing protein pno1</fullName>
    </recommendedName>
    <alternativeName>
        <fullName>Ribosomal RNA-processing protein 28</fullName>
    </alternativeName>
</protein>
<keyword id="KW-0963">Cytoplasm</keyword>
<keyword id="KW-0539">Nucleus</keyword>
<keyword id="KW-0597">Phosphoprotein</keyword>
<keyword id="KW-1185">Reference proteome</keyword>
<keyword id="KW-0690">Ribosome biogenesis</keyword>
<keyword id="KW-0694">RNA-binding</keyword>
<feature type="chain" id="PRO_0000278359" description="Pre-rRNA-processing protein pno1">
    <location>
        <begin position="1"/>
        <end position="241"/>
    </location>
</feature>
<feature type="domain" description="KH">
    <location>
        <begin position="162"/>
        <end position="214"/>
    </location>
</feature>
<feature type="region of interest" description="Disordered" evidence="2">
    <location>
        <begin position="48"/>
        <end position="71"/>
    </location>
</feature>
<feature type="modified residue" description="Phosphothreonine" evidence="5">
    <location>
        <position position="52"/>
    </location>
</feature>
<name>PNO1_SCHPO</name>
<evidence type="ECO:0000250" key="1"/>
<evidence type="ECO:0000256" key="2">
    <source>
        <dbReference type="SAM" id="MobiDB-lite"/>
    </source>
</evidence>
<evidence type="ECO:0000269" key="3">
    <source>
    </source>
</evidence>
<evidence type="ECO:0000269" key="4">
    <source>
    </source>
</evidence>
<evidence type="ECO:0000269" key="5">
    <source>
    </source>
</evidence>
<evidence type="ECO:0000305" key="6"/>
<comment type="function">
    <text evidence="3">Required for small ribosomal subunit (SSU) synthesis. Has a role in the processing of early nucleolar and late cytoplasmic pre-RNA species.</text>
</comment>
<comment type="subunit">
    <text evidence="1">Component of the small ribosomal subunit, ribosomal RNA processing complex (SSU RRP complex).</text>
</comment>
<comment type="subcellular location">
    <subcellularLocation>
        <location evidence="4">Cytoplasm</location>
    </subcellularLocation>
    <subcellularLocation>
        <location evidence="4">Nucleus</location>
    </subcellularLocation>
    <subcellularLocation>
        <location evidence="3">Nucleus</location>
        <location evidence="3">Nucleolus</location>
    </subcellularLocation>
</comment>
<comment type="similarity">
    <text evidence="6">Belongs to the PNO1 family.</text>
</comment>